<organism>
    <name type="scientific">Cavia porcellus</name>
    <name type="common">Guinea pig</name>
    <dbReference type="NCBI Taxonomy" id="10141"/>
    <lineage>
        <taxon>Eukaryota</taxon>
        <taxon>Metazoa</taxon>
        <taxon>Chordata</taxon>
        <taxon>Craniata</taxon>
        <taxon>Vertebrata</taxon>
        <taxon>Euteleostomi</taxon>
        <taxon>Mammalia</taxon>
        <taxon>Eutheria</taxon>
        <taxon>Euarchontoglires</taxon>
        <taxon>Glires</taxon>
        <taxon>Rodentia</taxon>
        <taxon>Hystricomorpha</taxon>
        <taxon>Caviidae</taxon>
        <taxon>Cavia</taxon>
    </lineage>
</organism>
<reference key="1">
    <citation type="submission" date="2003-07" db="EMBL/GenBank/DDBJ databases">
        <title>Molecular cloning of a GnRH receptor in the guinea pig.</title>
        <authorList>
            <person name="Fujii Y."/>
            <person name="Ikemoto T."/>
            <person name="Park M.K."/>
        </authorList>
    </citation>
    <scope>NUCLEOTIDE SEQUENCE [MRNA]</scope>
    <source>
        <strain>Hartley</strain>
    </source>
</reference>
<sequence length="328" mass="37690">MQDDTSSEQNPTHCSAINSSVPLVQGALPTLTLSGKIRVTVTFFLFLVSTTLNASFLLKLQKWTQKKEKGKKLSRMKVLLKHLTLANLLETLIVMPLDGMWNITVQWYAGELLCKILSYLKLFSMYAPAFMMVVISLDRSMAITRPLPVQSNRKLEQSMTGLAWGLSSVLAGPQLYIFKMIHLENGPGQTEVFSQCVTHCSFPQWWHQAFYNFFTFICLFIIPLLIMLICNAKIIFTLTQVLQQDSNKLQLNQSKNNIPRARLRTLKMTVAFAASFIVCWTPYYVLGLWYWFDPGMLHRMSEPVNHFFFLFAFLNPCFDPLIYGYFSL</sequence>
<name>GNRHR_CAVPO</name>
<protein>
    <recommendedName>
        <fullName>Gonadotropin-releasing hormone receptor</fullName>
        <shortName>GnRH receptor</shortName>
        <shortName>GnRH-R</shortName>
    </recommendedName>
</protein>
<gene>
    <name type="primary">GNRHR</name>
</gene>
<evidence type="ECO:0000255" key="1"/>
<evidence type="ECO:0000255" key="2">
    <source>
        <dbReference type="PROSITE-ProRule" id="PRU00521"/>
    </source>
</evidence>
<comment type="function">
    <text>Receptor for gonadotropin releasing hormone (GnRH) that mediates the action of GnRH to stimulate the secretion of the gonadotropic hormones luteinizing hormone (LH) and follicle-stimulating hormone (FSH). This receptor mediates its action by association with G-proteins that activate a phosphatidylinositol-calcium second messenger system.</text>
</comment>
<comment type="subcellular location">
    <subcellularLocation>
        <location>Cell membrane</location>
        <topology>Multi-pass membrane protein</topology>
    </subcellularLocation>
</comment>
<comment type="similarity">
    <text evidence="2">Belongs to the G-protein coupled receptor 1 family.</text>
</comment>
<dbReference type="EMBL" id="AF426176">
    <property type="protein sequence ID" value="AAN75711.2"/>
    <property type="molecule type" value="mRNA"/>
</dbReference>
<dbReference type="RefSeq" id="NP_001166428.1">
    <property type="nucleotide sequence ID" value="NM_001172957.2"/>
</dbReference>
<dbReference type="SMR" id="Q8CH60"/>
<dbReference type="FunCoup" id="Q8CH60">
    <property type="interactions" value="988"/>
</dbReference>
<dbReference type="STRING" id="10141.ENSCPOP00000013163"/>
<dbReference type="GlyCosmos" id="Q8CH60">
    <property type="glycosylation" value="1 site, No reported glycans"/>
</dbReference>
<dbReference type="Ensembl" id="ENSCPOT00000014754.3">
    <property type="protein sequence ID" value="ENSCPOP00000013163.2"/>
    <property type="gene ID" value="ENSCPOG00000014609.4"/>
</dbReference>
<dbReference type="GeneID" id="100135532"/>
<dbReference type="KEGG" id="cpoc:100135532"/>
<dbReference type="CTD" id="2798"/>
<dbReference type="VEuPathDB" id="HostDB:ENSCPOG00000014609"/>
<dbReference type="eggNOG" id="KOG3656">
    <property type="taxonomic scope" value="Eukaryota"/>
</dbReference>
<dbReference type="GeneTree" id="ENSGT01130000278263"/>
<dbReference type="HOGENOM" id="CLU_009579_15_2_1"/>
<dbReference type="InParanoid" id="Q8CH60"/>
<dbReference type="OMA" id="LHQDPHE"/>
<dbReference type="OrthoDB" id="6022667at2759"/>
<dbReference type="TreeFam" id="TF106499"/>
<dbReference type="Proteomes" id="UP000005447">
    <property type="component" value="Unassembled WGS sequence"/>
</dbReference>
<dbReference type="Bgee" id="ENSCPOG00000014609">
    <property type="expression patterns" value="Expressed in pituitary gland and 1 other cell type or tissue"/>
</dbReference>
<dbReference type="GO" id="GO:0005886">
    <property type="term" value="C:plasma membrane"/>
    <property type="evidence" value="ECO:0007669"/>
    <property type="project" value="UniProtKB-SubCell"/>
</dbReference>
<dbReference type="GO" id="GO:0004968">
    <property type="term" value="F:gonadotropin-releasing hormone receptor activity"/>
    <property type="evidence" value="ECO:0007669"/>
    <property type="project" value="Ensembl"/>
</dbReference>
<dbReference type="GO" id="GO:0042277">
    <property type="term" value="F:peptide binding"/>
    <property type="evidence" value="ECO:0007669"/>
    <property type="project" value="TreeGrafter"/>
</dbReference>
<dbReference type="FunFam" id="1.20.1070.10:FF:000203">
    <property type="entry name" value="gonadotropin-releasing hormone receptor"/>
    <property type="match status" value="1"/>
</dbReference>
<dbReference type="Gene3D" id="1.20.1070.10">
    <property type="entry name" value="Rhodopsin 7-helix transmembrane proteins"/>
    <property type="match status" value="1"/>
</dbReference>
<dbReference type="InterPro" id="IPR000276">
    <property type="entry name" value="GPCR_Rhodpsn"/>
</dbReference>
<dbReference type="InterPro" id="IPR017452">
    <property type="entry name" value="GPCR_Rhodpsn_7TM"/>
</dbReference>
<dbReference type="InterPro" id="IPR001658">
    <property type="entry name" value="GphnRH_fam_rcpt"/>
</dbReference>
<dbReference type="PANTHER" id="PTHR24241:SF22">
    <property type="entry name" value="GONADOTROPIN-RELEASING HORMONE RECEPTOR"/>
    <property type="match status" value="1"/>
</dbReference>
<dbReference type="PANTHER" id="PTHR24241">
    <property type="entry name" value="NEUROPEPTIDE RECEPTOR-RELATED G-PROTEIN COUPLED RECEPTOR"/>
    <property type="match status" value="1"/>
</dbReference>
<dbReference type="Pfam" id="PF00001">
    <property type="entry name" value="7tm_1"/>
    <property type="match status" value="1"/>
</dbReference>
<dbReference type="PRINTS" id="PR00529">
    <property type="entry name" value="GNADOTRPHINR"/>
</dbReference>
<dbReference type="PRINTS" id="PR00237">
    <property type="entry name" value="GPCRRHODOPSN"/>
</dbReference>
<dbReference type="SUPFAM" id="SSF81321">
    <property type="entry name" value="Family A G protein-coupled receptor-like"/>
    <property type="match status" value="1"/>
</dbReference>
<dbReference type="PROSITE" id="PS00237">
    <property type="entry name" value="G_PROTEIN_RECEP_F1_1"/>
    <property type="match status" value="1"/>
</dbReference>
<dbReference type="PROSITE" id="PS50262">
    <property type="entry name" value="G_PROTEIN_RECEP_F1_2"/>
    <property type="match status" value="1"/>
</dbReference>
<feature type="chain" id="PRO_0000069485" description="Gonadotropin-releasing hormone receptor">
    <location>
        <begin position="1"/>
        <end position="328"/>
    </location>
</feature>
<feature type="topological domain" description="Extracellular" evidence="1">
    <location>
        <begin position="1"/>
        <end position="38"/>
    </location>
</feature>
<feature type="transmembrane region" description="Helical; Name=1" evidence="1">
    <location>
        <begin position="39"/>
        <end position="59"/>
    </location>
</feature>
<feature type="topological domain" description="Cytoplasmic" evidence="1">
    <location>
        <begin position="60"/>
        <end position="84"/>
    </location>
</feature>
<feature type="transmembrane region" description="Helical; Name=2" evidence="1">
    <location>
        <begin position="85"/>
        <end position="105"/>
    </location>
</feature>
<feature type="topological domain" description="Extracellular" evidence="1">
    <location>
        <begin position="106"/>
        <end position="115"/>
    </location>
</feature>
<feature type="transmembrane region" description="Helical; Name=3" evidence="1">
    <location>
        <begin position="116"/>
        <end position="136"/>
    </location>
</feature>
<feature type="topological domain" description="Cytoplasmic" evidence="1">
    <location>
        <begin position="137"/>
        <end position="160"/>
    </location>
</feature>
<feature type="transmembrane region" description="Helical; Name=4" evidence="1">
    <location>
        <begin position="161"/>
        <end position="181"/>
    </location>
</feature>
<feature type="topological domain" description="Extracellular" evidence="1">
    <location>
        <begin position="182"/>
        <end position="208"/>
    </location>
</feature>
<feature type="transmembrane region" description="Helical; Name=5" evidence="1">
    <location>
        <begin position="209"/>
        <end position="229"/>
    </location>
</feature>
<feature type="topological domain" description="Cytoplasmic" evidence="1">
    <location>
        <begin position="230"/>
        <end position="271"/>
    </location>
</feature>
<feature type="transmembrane region" description="Helical; Name=6" evidence="1">
    <location>
        <begin position="272"/>
        <end position="292"/>
    </location>
</feature>
<feature type="topological domain" description="Extracellular" evidence="1">
    <location>
        <begin position="293"/>
        <end position="306"/>
    </location>
</feature>
<feature type="transmembrane region" description="Helical; Name=7" evidence="1">
    <location>
        <begin position="307"/>
        <end position="327"/>
    </location>
</feature>
<feature type="topological domain" description="Cytoplasmic" evidence="1">
    <location>
        <position position="328"/>
    </location>
</feature>
<feature type="glycosylation site" description="N-linked (GlcNAc...) asparagine" evidence="1">
    <location>
        <position position="18"/>
    </location>
</feature>
<feature type="disulfide bond" evidence="2">
    <location>
        <begin position="114"/>
        <end position="196"/>
    </location>
</feature>
<accession>Q8CH60</accession>
<proteinExistence type="evidence at transcript level"/>
<keyword id="KW-1003">Cell membrane</keyword>
<keyword id="KW-1015">Disulfide bond</keyword>
<keyword id="KW-0297">G-protein coupled receptor</keyword>
<keyword id="KW-0325">Glycoprotein</keyword>
<keyword id="KW-0472">Membrane</keyword>
<keyword id="KW-0675">Receptor</keyword>
<keyword id="KW-1185">Reference proteome</keyword>
<keyword id="KW-0807">Transducer</keyword>
<keyword id="KW-0812">Transmembrane</keyword>
<keyword id="KW-1133">Transmembrane helix</keyword>